<gene>
    <name evidence="1" type="primary">essA</name>
    <name type="ordered locus">SAR0281</name>
</gene>
<feature type="chain" id="PRO_0000019572" description="ESAT-6 secretion machinery protein EssA">
    <location>
        <begin position="1"/>
        <end position="152"/>
    </location>
</feature>
<feature type="topological domain" description="Cytoplasmic" evidence="1">
    <location>
        <begin position="1"/>
        <end position="114"/>
    </location>
</feature>
<feature type="transmembrane region" description="Helical" evidence="2">
    <location>
        <begin position="115"/>
        <end position="135"/>
    </location>
</feature>
<feature type="topological domain" description="Extracellular" evidence="1">
    <location>
        <begin position="136"/>
        <end position="152"/>
    </location>
</feature>
<reference key="1">
    <citation type="journal article" date="2004" name="Proc. Natl. Acad. Sci. U.S.A.">
        <title>Complete genomes of two clinical Staphylococcus aureus strains: evidence for the rapid evolution of virulence and drug resistance.</title>
        <authorList>
            <person name="Holden M.T.G."/>
            <person name="Feil E.J."/>
            <person name="Lindsay J.A."/>
            <person name="Peacock S.J."/>
            <person name="Day N.P.J."/>
            <person name="Enright M.C."/>
            <person name="Foster T.J."/>
            <person name="Moore C.E."/>
            <person name="Hurst L."/>
            <person name="Atkin R."/>
            <person name="Barron A."/>
            <person name="Bason N."/>
            <person name="Bentley S.D."/>
            <person name="Chillingworth C."/>
            <person name="Chillingworth T."/>
            <person name="Churcher C."/>
            <person name="Clark L."/>
            <person name="Corton C."/>
            <person name="Cronin A."/>
            <person name="Doggett J."/>
            <person name="Dowd L."/>
            <person name="Feltwell T."/>
            <person name="Hance Z."/>
            <person name="Harris B."/>
            <person name="Hauser H."/>
            <person name="Holroyd S."/>
            <person name="Jagels K."/>
            <person name="James K.D."/>
            <person name="Lennard N."/>
            <person name="Line A."/>
            <person name="Mayes R."/>
            <person name="Moule S."/>
            <person name="Mungall K."/>
            <person name="Ormond D."/>
            <person name="Quail M.A."/>
            <person name="Rabbinowitsch E."/>
            <person name="Rutherford K.M."/>
            <person name="Sanders M."/>
            <person name="Sharp S."/>
            <person name="Simmonds M."/>
            <person name="Stevens K."/>
            <person name="Whitehead S."/>
            <person name="Barrell B.G."/>
            <person name="Spratt B.G."/>
            <person name="Parkhill J."/>
        </authorList>
    </citation>
    <scope>NUCLEOTIDE SEQUENCE [LARGE SCALE GENOMIC DNA]</scope>
    <source>
        <strain>MRSA252</strain>
    </source>
</reference>
<accession>Q6GK27</accession>
<name>ESSA_STAAR</name>
<keyword id="KW-1003">Cell membrane</keyword>
<keyword id="KW-0472">Membrane</keyword>
<keyword id="KW-0812">Transmembrane</keyword>
<keyword id="KW-1133">Transmembrane helix</keyword>
<keyword id="KW-0843">Virulence</keyword>
<comment type="function">
    <text evidence="1">Component of the ESAT-6 secretion system (Ess). Required for the secretion of EsxA.</text>
</comment>
<comment type="subcellular location">
    <subcellularLocation>
        <location evidence="1">Cell membrane</location>
        <topology evidence="2">Single-pass type I membrane protein</topology>
    </subcellularLocation>
</comment>
<comment type="miscellaneous">
    <text evidence="3">This strain lacks esxB and esxC.</text>
</comment>
<comment type="similarity">
    <text evidence="3">Belongs to the EssA family.</text>
</comment>
<sequence>MLMNSVIALTFLTASSNNGGLNIDVQQEEEKRINNDLNQYDTTLFNKDSKAVNDAIVKQKKERQQQIKNDMFQNQASHSTRLNETKKVLFSKSNLEKTSESDKSPYIQNKQEKKIFPYILMSVGAFLTLGFVIFSIHKGRRTKNESARKSNI</sequence>
<organism>
    <name type="scientific">Staphylococcus aureus (strain MRSA252)</name>
    <dbReference type="NCBI Taxonomy" id="282458"/>
    <lineage>
        <taxon>Bacteria</taxon>
        <taxon>Bacillati</taxon>
        <taxon>Bacillota</taxon>
        <taxon>Bacilli</taxon>
        <taxon>Bacillales</taxon>
        <taxon>Staphylococcaceae</taxon>
        <taxon>Staphylococcus</taxon>
    </lineage>
</organism>
<protein>
    <recommendedName>
        <fullName evidence="1">ESAT-6 secretion machinery protein EssA</fullName>
    </recommendedName>
</protein>
<proteinExistence type="inferred from homology"/>
<dbReference type="EMBL" id="BX571856">
    <property type="protein sequence ID" value="CAG39308.1"/>
    <property type="molecule type" value="Genomic_DNA"/>
</dbReference>
<dbReference type="RefSeq" id="WP_000928937.1">
    <property type="nucleotide sequence ID" value="NC_002952.2"/>
</dbReference>
<dbReference type="KEGG" id="sar:SAR0281"/>
<dbReference type="HOGENOM" id="CLU_144832_0_0_9"/>
<dbReference type="Proteomes" id="UP000000596">
    <property type="component" value="Chromosome"/>
</dbReference>
<dbReference type="GO" id="GO:0005886">
    <property type="term" value="C:plasma membrane"/>
    <property type="evidence" value="ECO:0007669"/>
    <property type="project" value="UniProtKB-SubCell"/>
</dbReference>
<dbReference type="InterPro" id="IPR034026">
    <property type="entry name" value="EssA"/>
</dbReference>
<dbReference type="InterPro" id="IPR018920">
    <property type="entry name" value="EssA/YueC"/>
</dbReference>
<dbReference type="NCBIfam" id="TIGR03927">
    <property type="entry name" value="T7SS_EssA_Firm"/>
    <property type="match status" value="1"/>
</dbReference>
<dbReference type="Pfam" id="PF10661">
    <property type="entry name" value="EssA"/>
    <property type="match status" value="1"/>
</dbReference>
<evidence type="ECO:0000250" key="1">
    <source>
        <dbReference type="UniProtKB" id="P0C052"/>
    </source>
</evidence>
<evidence type="ECO:0000255" key="2"/>
<evidence type="ECO:0000305" key="3"/>